<name>RK16_IPOPU</name>
<gene>
    <name evidence="1" type="primary">rpl16</name>
</gene>
<proteinExistence type="inferred from homology"/>
<sequence length="147" mass="16600">MLSPKRTRFRKQHRGRMKGISSGGNHICFGKYALQALEPAWITSRQIEAGRRAMTRNARRGGKIWVRIFPDKPVTVRPAETRMGSGKGSPEYWVAVVKPGRILYEMGGVTKKIARRAISIAASKMPIRTQFISSEIEEKSKTTRKES</sequence>
<reference key="1">
    <citation type="journal article" date="2007" name="BMC Plant Biol.">
        <title>Complete plastid genome sequences suggest strong selection for retention of photosynthetic genes in the parasitic plant genus Cuscuta.</title>
        <authorList>
            <person name="McNeal J.R."/>
            <person name="Kuehl J.V."/>
            <person name="Boore J.L."/>
            <person name="dePamphilis C.W."/>
        </authorList>
    </citation>
    <scope>NUCLEOTIDE SEQUENCE [LARGE SCALE GENOMIC DNA]</scope>
</reference>
<organism>
    <name type="scientific">Ipomoea purpurea</name>
    <name type="common">Common morning glory</name>
    <name type="synonym">Pharbitis purpurea</name>
    <dbReference type="NCBI Taxonomy" id="4121"/>
    <lineage>
        <taxon>Eukaryota</taxon>
        <taxon>Viridiplantae</taxon>
        <taxon>Streptophyta</taxon>
        <taxon>Embryophyta</taxon>
        <taxon>Tracheophyta</taxon>
        <taxon>Spermatophyta</taxon>
        <taxon>Magnoliopsida</taxon>
        <taxon>eudicotyledons</taxon>
        <taxon>Gunneridae</taxon>
        <taxon>Pentapetalae</taxon>
        <taxon>asterids</taxon>
        <taxon>lamiids</taxon>
        <taxon>Solanales</taxon>
        <taxon>Convolvulaceae</taxon>
        <taxon>Ipomoeeae</taxon>
        <taxon>Ipomoea</taxon>
    </lineage>
</organism>
<geneLocation type="chloroplast"/>
<comment type="subunit">
    <text evidence="1">Part of the 50S ribosomal subunit.</text>
</comment>
<comment type="subcellular location">
    <subcellularLocation>
        <location>Plastid</location>
        <location>Chloroplast</location>
    </subcellularLocation>
</comment>
<comment type="similarity">
    <text evidence="1">Belongs to the universal ribosomal protein uL16 family.</text>
</comment>
<feature type="chain" id="PRO_0000354639" description="Large ribosomal subunit protein uL16c">
    <location>
        <begin position="1"/>
        <end position="147"/>
    </location>
</feature>
<feature type="region of interest" description="Disordered" evidence="2">
    <location>
        <begin position="1"/>
        <end position="20"/>
    </location>
</feature>
<feature type="compositionally biased region" description="Basic residues" evidence="2">
    <location>
        <begin position="1"/>
        <end position="17"/>
    </location>
</feature>
<accession>A7Y3I8</accession>
<dbReference type="EMBL" id="EU118126">
    <property type="protein sequence ID" value="ABV02385.1"/>
    <property type="molecule type" value="Genomic_DNA"/>
</dbReference>
<dbReference type="RefSeq" id="YP_001468345.1">
    <property type="nucleotide sequence ID" value="NC_009808.1"/>
</dbReference>
<dbReference type="SMR" id="A7Y3I8"/>
<dbReference type="GeneID" id="5601343"/>
<dbReference type="GO" id="GO:0009507">
    <property type="term" value="C:chloroplast"/>
    <property type="evidence" value="ECO:0007669"/>
    <property type="project" value="UniProtKB-SubCell"/>
</dbReference>
<dbReference type="GO" id="GO:0005762">
    <property type="term" value="C:mitochondrial large ribosomal subunit"/>
    <property type="evidence" value="ECO:0007669"/>
    <property type="project" value="TreeGrafter"/>
</dbReference>
<dbReference type="GO" id="GO:0019843">
    <property type="term" value="F:rRNA binding"/>
    <property type="evidence" value="ECO:0007669"/>
    <property type="project" value="InterPro"/>
</dbReference>
<dbReference type="GO" id="GO:0003735">
    <property type="term" value="F:structural constituent of ribosome"/>
    <property type="evidence" value="ECO:0007669"/>
    <property type="project" value="InterPro"/>
</dbReference>
<dbReference type="GO" id="GO:0032543">
    <property type="term" value="P:mitochondrial translation"/>
    <property type="evidence" value="ECO:0007669"/>
    <property type="project" value="TreeGrafter"/>
</dbReference>
<dbReference type="CDD" id="cd01433">
    <property type="entry name" value="Ribosomal_L16_L10e"/>
    <property type="match status" value="1"/>
</dbReference>
<dbReference type="FunFam" id="3.90.1170.10:FF:000001">
    <property type="entry name" value="50S ribosomal protein L16"/>
    <property type="match status" value="1"/>
</dbReference>
<dbReference type="Gene3D" id="3.90.1170.10">
    <property type="entry name" value="Ribosomal protein L10e/L16"/>
    <property type="match status" value="1"/>
</dbReference>
<dbReference type="HAMAP" id="MF_01342">
    <property type="entry name" value="Ribosomal_uL16"/>
    <property type="match status" value="1"/>
</dbReference>
<dbReference type="InterPro" id="IPR047873">
    <property type="entry name" value="Ribosomal_uL16"/>
</dbReference>
<dbReference type="InterPro" id="IPR000114">
    <property type="entry name" value="Ribosomal_uL16_bact-type"/>
</dbReference>
<dbReference type="InterPro" id="IPR020798">
    <property type="entry name" value="Ribosomal_uL16_CS"/>
</dbReference>
<dbReference type="InterPro" id="IPR016180">
    <property type="entry name" value="Ribosomal_uL16_dom"/>
</dbReference>
<dbReference type="InterPro" id="IPR036920">
    <property type="entry name" value="Ribosomal_uL16_sf"/>
</dbReference>
<dbReference type="NCBIfam" id="TIGR01164">
    <property type="entry name" value="rplP_bact"/>
    <property type="match status" value="1"/>
</dbReference>
<dbReference type="PANTHER" id="PTHR12220">
    <property type="entry name" value="50S/60S RIBOSOMAL PROTEIN L16"/>
    <property type="match status" value="1"/>
</dbReference>
<dbReference type="PANTHER" id="PTHR12220:SF13">
    <property type="entry name" value="LARGE RIBOSOMAL SUBUNIT PROTEIN UL16M"/>
    <property type="match status" value="1"/>
</dbReference>
<dbReference type="Pfam" id="PF00252">
    <property type="entry name" value="Ribosomal_L16"/>
    <property type="match status" value="1"/>
</dbReference>
<dbReference type="PRINTS" id="PR00060">
    <property type="entry name" value="RIBOSOMALL16"/>
</dbReference>
<dbReference type="SUPFAM" id="SSF54686">
    <property type="entry name" value="Ribosomal protein L16p/L10e"/>
    <property type="match status" value="1"/>
</dbReference>
<dbReference type="PROSITE" id="PS00586">
    <property type="entry name" value="RIBOSOMAL_L16_1"/>
    <property type="match status" value="1"/>
</dbReference>
<dbReference type="PROSITE" id="PS00701">
    <property type="entry name" value="RIBOSOMAL_L16_2"/>
    <property type="match status" value="1"/>
</dbReference>
<protein>
    <recommendedName>
        <fullName evidence="1">Large ribosomal subunit protein uL16c</fullName>
    </recommendedName>
    <alternativeName>
        <fullName evidence="3">50S ribosomal protein L16, chloroplastic</fullName>
    </alternativeName>
</protein>
<evidence type="ECO:0000255" key="1">
    <source>
        <dbReference type="HAMAP-Rule" id="MF_01342"/>
    </source>
</evidence>
<evidence type="ECO:0000256" key="2">
    <source>
        <dbReference type="SAM" id="MobiDB-lite"/>
    </source>
</evidence>
<evidence type="ECO:0000305" key="3"/>
<keyword id="KW-0150">Chloroplast</keyword>
<keyword id="KW-0934">Plastid</keyword>
<keyword id="KW-0687">Ribonucleoprotein</keyword>
<keyword id="KW-0689">Ribosomal protein</keyword>